<proteinExistence type="inferred from homology"/>
<feature type="chain" id="PRO_1000065062" description="Acetylornithine deacetylase">
    <location>
        <begin position="1"/>
        <end position="383"/>
    </location>
</feature>
<feature type="active site" evidence="1">
    <location>
        <position position="82"/>
    </location>
</feature>
<feature type="active site" evidence="1">
    <location>
        <position position="144"/>
    </location>
</feature>
<feature type="binding site" evidence="1">
    <location>
        <position position="80"/>
    </location>
    <ligand>
        <name>Zn(2+)</name>
        <dbReference type="ChEBI" id="CHEBI:29105"/>
        <label>1</label>
    </ligand>
</feature>
<feature type="binding site" evidence="1">
    <location>
        <position position="112"/>
    </location>
    <ligand>
        <name>Zn(2+)</name>
        <dbReference type="ChEBI" id="CHEBI:29105"/>
        <label>1</label>
    </ligand>
</feature>
<feature type="binding site" evidence="1">
    <location>
        <position position="112"/>
    </location>
    <ligand>
        <name>Zn(2+)</name>
        <dbReference type="ChEBI" id="CHEBI:29105"/>
        <label>2</label>
    </ligand>
</feature>
<feature type="binding site" evidence="1">
    <location>
        <position position="145"/>
    </location>
    <ligand>
        <name>Zn(2+)</name>
        <dbReference type="ChEBI" id="CHEBI:29105"/>
        <label>2</label>
    </ligand>
</feature>
<feature type="binding site" evidence="1">
    <location>
        <position position="169"/>
    </location>
    <ligand>
        <name>Zn(2+)</name>
        <dbReference type="ChEBI" id="CHEBI:29105"/>
        <label>1</label>
    </ligand>
</feature>
<feature type="binding site" evidence="1">
    <location>
        <position position="355"/>
    </location>
    <ligand>
        <name>Zn(2+)</name>
        <dbReference type="ChEBI" id="CHEBI:29105"/>
        <label>2</label>
    </ligand>
</feature>
<reference key="1">
    <citation type="journal article" date="2005" name="Nucleic Acids Res.">
        <title>Genome dynamics and diversity of Shigella species, the etiologic agents of bacillary dysentery.</title>
        <authorList>
            <person name="Yang F."/>
            <person name="Yang J."/>
            <person name="Zhang X."/>
            <person name="Chen L."/>
            <person name="Jiang Y."/>
            <person name="Yan Y."/>
            <person name="Tang X."/>
            <person name="Wang J."/>
            <person name="Xiong Z."/>
            <person name="Dong J."/>
            <person name="Xue Y."/>
            <person name="Zhu Y."/>
            <person name="Xu X."/>
            <person name="Sun L."/>
            <person name="Chen S."/>
            <person name="Nie H."/>
            <person name="Peng J."/>
            <person name="Xu J."/>
            <person name="Wang Y."/>
            <person name="Yuan Z."/>
            <person name="Wen Y."/>
            <person name="Yao Z."/>
            <person name="Shen Y."/>
            <person name="Qiang B."/>
            <person name="Hou Y."/>
            <person name="Yu J."/>
            <person name="Jin Q."/>
        </authorList>
    </citation>
    <scope>NUCLEOTIDE SEQUENCE [LARGE SCALE GENOMIC DNA]</scope>
    <source>
        <strain>Sd197</strain>
    </source>
</reference>
<sequence>MKNKLPPFIEIYRALIATPSISATEEALDQSNADLITLLADWFKNLGFNVEVQPVPGTRNKFNMLASTGQGAGGLLLAGHTDTVPFDDGRWTRDPFTLTEHDGKLYGLGTADMKGFFAFILDALRDVDVTKLKKPLYILATADEETSMAGARYFAETTALRPDCAIIGEPTSLQPVRAHKGHISNAIRIQGQSGHSSDPARGVNAIELMHDAIGHILQLRDSLKERYHYEAFTVPYPTLNLGHIHGGDASNRICACCELHMDIRPLPGMTLNELNGLLNDALAPVSERWPGRLTVDELHPPIPGYECPPNHQLVEVVEKLLGAKTEVVNYCTEAPFIQTLCPTLVLGPGSINQAHQPDEYLETRFIKPTRELITQVIHHFCWH</sequence>
<keyword id="KW-0028">Amino-acid biosynthesis</keyword>
<keyword id="KW-0055">Arginine biosynthesis</keyword>
<keyword id="KW-0170">Cobalt</keyword>
<keyword id="KW-0963">Cytoplasm</keyword>
<keyword id="KW-0378">Hydrolase</keyword>
<keyword id="KW-0479">Metal-binding</keyword>
<keyword id="KW-1185">Reference proteome</keyword>
<keyword id="KW-0862">Zinc</keyword>
<evidence type="ECO:0000255" key="1">
    <source>
        <dbReference type="HAMAP-Rule" id="MF_01108"/>
    </source>
</evidence>
<gene>
    <name evidence="1" type="primary">argE</name>
    <name type="ordered locus">SDY_3792</name>
</gene>
<accession>Q32AB8</accession>
<protein>
    <recommendedName>
        <fullName evidence="1">Acetylornithine deacetylase</fullName>
        <shortName evidence="1">AO</shortName>
        <shortName evidence="1">Acetylornithinase</shortName>
        <ecNumber evidence="1">3.5.1.16</ecNumber>
    </recommendedName>
    <alternativeName>
        <fullName evidence="1">N-acetylornithinase</fullName>
        <shortName evidence="1">NAO</shortName>
    </alternativeName>
</protein>
<comment type="function">
    <text evidence="1">Catalyzes the hydrolysis of the amide bond of N(2)-acetylated L-amino acids. Cleaves the acetyl group from N-acetyl-L-ornithine to form L-ornithine, an intermediate in L-arginine biosynthesis pathway, and a branchpoint in the synthesis of polyamines.</text>
</comment>
<comment type="catalytic activity">
    <reaction evidence="1">
        <text>N(2)-acetyl-L-ornithine + H2O = L-ornithine + acetate</text>
        <dbReference type="Rhea" id="RHEA:15941"/>
        <dbReference type="ChEBI" id="CHEBI:15377"/>
        <dbReference type="ChEBI" id="CHEBI:30089"/>
        <dbReference type="ChEBI" id="CHEBI:46911"/>
        <dbReference type="ChEBI" id="CHEBI:57805"/>
        <dbReference type="EC" id="3.5.1.16"/>
    </reaction>
</comment>
<comment type="cofactor">
    <cofactor evidence="1">
        <name>Zn(2+)</name>
        <dbReference type="ChEBI" id="CHEBI:29105"/>
    </cofactor>
    <cofactor evidence="1">
        <name>Co(2+)</name>
        <dbReference type="ChEBI" id="CHEBI:48828"/>
    </cofactor>
    <text evidence="1">Binds 2 Zn(2+) or Co(2+) ions per subunit.</text>
</comment>
<comment type="cofactor">
    <cofactor evidence="1">
        <name>glutathione</name>
        <dbReference type="ChEBI" id="CHEBI:57925"/>
    </cofactor>
</comment>
<comment type="pathway">
    <text evidence="1">Amino-acid biosynthesis; L-arginine biosynthesis; L-ornithine from N(2)-acetyl-L-ornithine (linear): step 1/1.</text>
</comment>
<comment type="subunit">
    <text evidence="1">Homodimer.</text>
</comment>
<comment type="subcellular location">
    <subcellularLocation>
        <location evidence="1">Cytoplasm</location>
    </subcellularLocation>
</comment>
<comment type="similarity">
    <text evidence="1">Belongs to the peptidase M20A family. ArgE subfamily.</text>
</comment>
<organism>
    <name type="scientific">Shigella dysenteriae serotype 1 (strain Sd197)</name>
    <dbReference type="NCBI Taxonomy" id="300267"/>
    <lineage>
        <taxon>Bacteria</taxon>
        <taxon>Pseudomonadati</taxon>
        <taxon>Pseudomonadota</taxon>
        <taxon>Gammaproteobacteria</taxon>
        <taxon>Enterobacterales</taxon>
        <taxon>Enterobacteriaceae</taxon>
        <taxon>Shigella</taxon>
    </lineage>
</organism>
<dbReference type="EC" id="3.5.1.16" evidence="1"/>
<dbReference type="EMBL" id="CP000034">
    <property type="protein sequence ID" value="ABB63737.1"/>
    <property type="molecule type" value="Genomic_DNA"/>
</dbReference>
<dbReference type="RefSeq" id="WP_005015828.1">
    <property type="nucleotide sequence ID" value="NC_007606.1"/>
</dbReference>
<dbReference type="RefSeq" id="YP_405228.1">
    <property type="nucleotide sequence ID" value="NC_007606.1"/>
</dbReference>
<dbReference type="SMR" id="Q32AB8"/>
<dbReference type="STRING" id="300267.SDY_3792"/>
<dbReference type="MEROPS" id="M20.974"/>
<dbReference type="EnsemblBacteria" id="ABB63737">
    <property type="protein sequence ID" value="ABB63737"/>
    <property type="gene ID" value="SDY_3792"/>
</dbReference>
<dbReference type="KEGG" id="sdy:SDY_3792"/>
<dbReference type="PATRIC" id="fig|300267.13.peg.4481"/>
<dbReference type="HOGENOM" id="CLU_021802_2_4_6"/>
<dbReference type="UniPathway" id="UPA00068">
    <property type="reaction ID" value="UER00110"/>
</dbReference>
<dbReference type="Proteomes" id="UP000002716">
    <property type="component" value="Chromosome"/>
</dbReference>
<dbReference type="GO" id="GO:0005737">
    <property type="term" value="C:cytoplasm"/>
    <property type="evidence" value="ECO:0007669"/>
    <property type="project" value="UniProtKB-SubCell"/>
</dbReference>
<dbReference type="GO" id="GO:0008777">
    <property type="term" value="F:acetylornithine deacetylase activity"/>
    <property type="evidence" value="ECO:0007669"/>
    <property type="project" value="UniProtKB-UniRule"/>
</dbReference>
<dbReference type="GO" id="GO:0008270">
    <property type="term" value="F:zinc ion binding"/>
    <property type="evidence" value="ECO:0007669"/>
    <property type="project" value="UniProtKB-UniRule"/>
</dbReference>
<dbReference type="GO" id="GO:0006526">
    <property type="term" value="P:L-arginine biosynthetic process"/>
    <property type="evidence" value="ECO:0007669"/>
    <property type="project" value="UniProtKB-UniRule"/>
</dbReference>
<dbReference type="CDD" id="cd03894">
    <property type="entry name" value="M20_ArgE"/>
    <property type="match status" value="1"/>
</dbReference>
<dbReference type="FunFam" id="3.30.70.360:FF:000003">
    <property type="entry name" value="Acetylornithine deacetylase"/>
    <property type="match status" value="1"/>
</dbReference>
<dbReference type="Gene3D" id="3.30.70.360">
    <property type="match status" value="1"/>
</dbReference>
<dbReference type="Gene3D" id="3.40.630.10">
    <property type="entry name" value="Zn peptidases"/>
    <property type="match status" value="1"/>
</dbReference>
<dbReference type="HAMAP" id="MF_01108">
    <property type="entry name" value="ArgE"/>
    <property type="match status" value="1"/>
</dbReference>
<dbReference type="InterPro" id="IPR010169">
    <property type="entry name" value="AcOrn-deacetyl"/>
</dbReference>
<dbReference type="InterPro" id="IPR001261">
    <property type="entry name" value="ArgE/DapE_CS"/>
</dbReference>
<dbReference type="InterPro" id="IPR036264">
    <property type="entry name" value="Bact_exopeptidase_dim_dom"/>
</dbReference>
<dbReference type="InterPro" id="IPR002933">
    <property type="entry name" value="Peptidase_M20"/>
</dbReference>
<dbReference type="InterPro" id="IPR011650">
    <property type="entry name" value="Peptidase_M20_dimer"/>
</dbReference>
<dbReference type="InterPro" id="IPR050072">
    <property type="entry name" value="Peptidase_M20A"/>
</dbReference>
<dbReference type="NCBIfam" id="TIGR01892">
    <property type="entry name" value="AcOrn-deacetyl"/>
    <property type="match status" value="1"/>
</dbReference>
<dbReference type="NCBIfam" id="NF003474">
    <property type="entry name" value="PRK05111.1"/>
    <property type="match status" value="1"/>
</dbReference>
<dbReference type="PANTHER" id="PTHR43808">
    <property type="entry name" value="ACETYLORNITHINE DEACETYLASE"/>
    <property type="match status" value="1"/>
</dbReference>
<dbReference type="PANTHER" id="PTHR43808:SF1">
    <property type="entry name" value="ACETYLORNITHINE DEACETYLASE"/>
    <property type="match status" value="1"/>
</dbReference>
<dbReference type="Pfam" id="PF07687">
    <property type="entry name" value="M20_dimer"/>
    <property type="match status" value="1"/>
</dbReference>
<dbReference type="Pfam" id="PF01546">
    <property type="entry name" value="Peptidase_M20"/>
    <property type="match status" value="1"/>
</dbReference>
<dbReference type="SUPFAM" id="SSF55031">
    <property type="entry name" value="Bacterial exopeptidase dimerisation domain"/>
    <property type="match status" value="1"/>
</dbReference>
<dbReference type="SUPFAM" id="SSF53187">
    <property type="entry name" value="Zn-dependent exopeptidases"/>
    <property type="match status" value="1"/>
</dbReference>
<dbReference type="PROSITE" id="PS00758">
    <property type="entry name" value="ARGE_DAPE_CPG2_1"/>
    <property type="match status" value="1"/>
</dbReference>
<dbReference type="PROSITE" id="PS00759">
    <property type="entry name" value="ARGE_DAPE_CPG2_2"/>
    <property type="match status" value="1"/>
</dbReference>
<name>ARGE_SHIDS</name>